<name>HUTU_KLEP3</name>
<gene>
    <name evidence="1" type="primary">hutU</name>
    <name type="ordered locus">KPK_3778</name>
</gene>
<protein>
    <recommendedName>
        <fullName evidence="1">Urocanate hydratase</fullName>
        <shortName evidence="1">Urocanase</shortName>
        <ecNumber evidence="1">4.2.1.49</ecNumber>
    </recommendedName>
    <alternativeName>
        <fullName evidence="1">Imidazolonepropionate hydrolase</fullName>
    </alternativeName>
</protein>
<accession>B5XZ80</accession>
<keyword id="KW-0963">Cytoplasm</keyword>
<keyword id="KW-0369">Histidine metabolism</keyword>
<keyword id="KW-0456">Lyase</keyword>
<keyword id="KW-0520">NAD</keyword>
<organism>
    <name type="scientific">Klebsiella pneumoniae (strain 342)</name>
    <dbReference type="NCBI Taxonomy" id="507522"/>
    <lineage>
        <taxon>Bacteria</taxon>
        <taxon>Pseudomonadati</taxon>
        <taxon>Pseudomonadota</taxon>
        <taxon>Gammaproteobacteria</taxon>
        <taxon>Enterobacterales</taxon>
        <taxon>Enterobacteriaceae</taxon>
        <taxon>Klebsiella/Raoultella group</taxon>
        <taxon>Klebsiella</taxon>
        <taxon>Klebsiella pneumoniae complex</taxon>
    </lineage>
</organism>
<feature type="chain" id="PRO_1000129565" description="Urocanate hydratase">
    <location>
        <begin position="1"/>
        <end position="562"/>
    </location>
</feature>
<feature type="active site" evidence="1">
    <location>
        <position position="410"/>
    </location>
</feature>
<feature type="binding site" evidence="1">
    <location>
        <begin position="52"/>
        <end position="53"/>
    </location>
    <ligand>
        <name>NAD(+)</name>
        <dbReference type="ChEBI" id="CHEBI:57540"/>
    </ligand>
</feature>
<feature type="binding site" evidence="1">
    <location>
        <position position="130"/>
    </location>
    <ligand>
        <name>NAD(+)</name>
        <dbReference type="ChEBI" id="CHEBI:57540"/>
    </ligand>
</feature>
<feature type="binding site" evidence="1">
    <location>
        <begin position="176"/>
        <end position="178"/>
    </location>
    <ligand>
        <name>NAD(+)</name>
        <dbReference type="ChEBI" id="CHEBI:57540"/>
    </ligand>
</feature>
<feature type="binding site" evidence="1">
    <location>
        <position position="196"/>
    </location>
    <ligand>
        <name>NAD(+)</name>
        <dbReference type="ChEBI" id="CHEBI:57540"/>
    </ligand>
</feature>
<feature type="binding site" evidence="1">
    <location>
        <position position="201"/>
    </location>
    <ligand>
        <name>NAD(+)</name>
        <dbReference type="ChEBI" id="CHEBI:57540"/>
    </ligand>
</feature>
<feature type="binding site" evidence="1">
    <location>
        <begin position="242"/>
        <end position="243"/>
    </location>
    <ligand>
        <name>NAD(+)</name>
        <dbReference type="ChEBI" id="CHEBI:57540"/>
    </ligand>
</feature>
<feature type="binding site" evidence="1">
    <location>
        <begin position="263"/>
        <end position="267"/>
    </location>
    <ligand>
        <name>NAD(+)</name>
        <dbReference type="ChEBI" id="CHEBI:57540"/>
    </ligand>
</feature>
<feature type="binding site" evidence="1">
    <location>
        <begin position="273"/>
        <end position="274"/>
    </location>
    <ligand>
        <name>NAD(+)</name>
        <dbReference type="ChEBI" id="CHEBI:57540"/>
    </ligand>
</feature>
<feature type="binding site" evidence="1">
    <location>
        <position position="322"/>
    </location>
    <ligand>
        <name>NAD(+)</name>
        <dbReference type="ChEBI" id="CHEBI:57540"/>
    </ligand>
</feature>
<feature type="binding site" evidence="1">
    <location>
        <position position="492"/>
    </location>
    <ligand>
        <name>NAD(+)</name>
        <dbReference type="ChEBI" id="CHEBI:57540"/>
    </ligand>
</feature>
<dbReference type="EC" id="4.2.1.49" evidence="1"/>
<dbReference type="EMBL" id="CP000964">
    <property type="protein sequence ID" value="ACI09126.1"/>
    <property type="molecule type" value="Genomic_DNA"/>
</dbReference>
<dbReference type="SMR" id="B5XZ80"/>
<dbReference type="KEGG" id="kpe:KPK_3778"/>
<dbReference type="HOGENOM" id="CLU_018868_0_1_6"/>
<dbReference type="UniPathway" id="UPA00379">
    <property type="reaction ID" value="UER00550"/>
</dbReference>
<dbReference type="Proteomes" id="UP000001734">
    <property type="component" value="Chromosome"/>
</dbReference>
<dbReference type="GO" id="GO:0005737">
    <property type="term" value="C:cytoplasm"/>
    <property type="evidence" value="ECO:0007669"/>
    <property type="project" value="UniProtKB-SubCell"/>
</dbReference>
<dbReference type="GO" id="GO:0016153">
    <property type="term" value="F:urocanate hydratase activity"/>
    <property type="evidence" value="ECO:0007669"/>
    <property type="project" value="UniProtKB-UniRule"/>
</dbReference>
<dbReference type="GO" id="GO:0019556">
    <property type="term" value="P:L-histidine catabolic process to glutamate and formamide"/>
    <property type="evidence" value="ECO:0007669"/>
    <property type="project" value="UniProtKB-UniPathway"/>
</dbReference>
<dbReference type="GO" id="GO:0019557">
    <property type="term" value="P:L-histidine catabolic process to glutamate and formate"/>
    <property type="evidence" value="ECO:0007669"/>
    <property type="project" value="UniProtKB-UniPathway"/>
</dbReference>
<dbReference type="FunFam" id="3.40.50.10730:FF:000001">
    <property type="entry name" value="Urocanate hydratase"/>
    <property type="match status" value="1"/>
</dbReference>
<dbReference type="Gene3D" id="3.40.50.10730">
    <property type="entry name" value="Urocanase like domains"/>
    <property type="match status" value="1"/>
</dbReference>
<dbReference type="Gene3D" id="3.40.1770.10">
    <property type="entry name" value="Urocanase superfamily"/>
    <property type="match status" value="1"/>
</dbReference>
<dbReference type="HAMAP" id="MF_00577">
    <property type="entry name" value="HutU"/>
    <property type="match status" value="1"/>
</dbReference>
<dbReference type="InterPro" id="IPR055351">
    <property type="entry name" value="Urocanase"/>
</dbReference>
<dbReference type="InterPro" id="IPR023637">
    <property type="entry name" value="Urocanase-like"/>
</dbReference>
<dbReference type="InterPro" id="IPR035401">
    <property type="entry name" value="Urocanase_C"/>
</dbReference>
<dbReference type="InterPro" id="IPR038364">
    <property type="entry name" value="Urocanase_central_sf"/>
</dbReference>
<dbReference type="InterPro" id="IPR023636">
    <property type="entry name" value="Urocanase_CS"/>
</dbReference>
<dbReference type="InterPro" id="IPR035400">
    <property type="entry name" value="Urocanase_N"/>
</dbReference>
<dbReference type="InterPro" id="IPR035085">
    <property type="entry name" value="Urocanase_Rossmann-like"/>
</dbReference>
<dbReference type="InterPro" id="IPR036190">
    <property type="entry name" value="Urocanase_sf"/>
</dbReference>
<dbReference type="NCBIfam" id="TIGR01228">
    <property type="entry name" value="hutU"/>
    <property type="match status" value="1"/>
</dbReference>
<dbReference type="NCBIfam" id="NF003820">
    <property type="entry name" value="PRK05414.1"/>
    <property type="match status" value="1"/>
</dbReference>
<dbReference type="PANTHER" id="PTHR12216">
    <property type="entry name" value="UROCANATE HYDRATASE"/>
    <property type="match status" value="1"/>
</dbReference>
<dbReference type="PANTHER" id="PTHR12216:SF4">
    <property type="entry name" value="UROCANATE HYDRATASE"/>
    <property type="match status" value="1"/>
</dbReference>
<dbReference type="Pfam" id="PF01175">
    <property type="entry name" value="Urocanase"/>
    <property type="match status" value="1"/>
</dbReference>
<dbReference type="Pfam" id="PF17392">
    <property type="entry name" value="Urocanase_C"/>
    <property type="match status" value="1"/>
</dbReference>
<dbReference type="Pfam" id="PF17391">
    <property type="entry name" value="Urocanase_N"/>
    <property type="match status" value="1"/>
</dbReference>
<dbReference type="PIRSF" id="PIRSF001423">
    <property type="entry name" value="Urocanate_hydrat"/>
    <property type="match status" value="1"/>
</dbReference>
<dbReference type="SUPFAM" id="SSF111326">
    <property type="entry name" value="Urocanase"/>
    <property type="match status" value="1"/>
</dbReference>
<dbReference type="PROSITE" id="PS01233">
    <property type="entry name" value="UROCANASE"/>
    <property type="match status" value="1"/>
</dbReference>
<sequence>MSQSKYRQLDVRAPRGTTLTARSWLTEAPLRMLMNNLDPDVAENPHELVVYGGIGRAARNWECYDAIVKALKNLESDETLLVQSGKPVGVFKTHENSPRVLIANSNLVPHWATWEHFNELDAKGLAMYGQMTAGSWIYIGSQGIVQGTYETFVEAGRQHYQGSLKGRWVLTAGLGGMGGAQPLAATLAGACSLNIECQQSRIDFRLRTRYVDEQATSLDDALARIKKYTAEGRAISIALCGNAADIVPELVKRGVRPDMVTDQTSAHDPLHGYLPKGWSWEEYQQKAESDPQGTILAAKRSMADHVQAMLAFNEMGVPTFDYGNNIRQMAQEMGVSNAFDFPGFVPAYIRPLFCRGIGPFRWVALSGDPQDIYKTDAKVKEIIKDDKHLHHWLDMARERISFQGLPARICWVGLEWRQKLGLAFNEMVRSGEVSAPIVIGRDHLDSGSVASPNRETEAMRDGSDAVSDWPLLNALLNTASGATWVSLHHGGGVGMGFSQHSGMVIVCDGTDEAAARIARVLRNDPATGVMRHADAGYDIAIECAAEQGLNLPMVAATQGNAK</sequence>
<proteinExistence type="inferred from homology"/>
<reference key="1">
    <citation type="journal article" date="2008" name="PLoS Genet.">
        <title>Complete genome sequence of the N2-fixing broad host range endophyte Klebsiella pneumoniae 342 and virulence predictions verified in mice.</title>
        <authorList>
            <person name="Fouts D.E."/>
            <person name="Tyler H.L."/>
            <person name="DeBoy R.T."/>
            <person name="Daugherty S."/>
            <person name="Ren Q."/>
            <person name="Badger J.H."/>
            <person name="Durkin A.S."/>
            <person name="Huot H."/>
            <person name="Shrivastava S."/>
            <person name="Kothari S."/>
            <person name="Dodson R.J."/>
            <person name="Mohamoud Y."/>
            <person name="Khouri H."/>
            <person name="Roesch L.F.W."/>
            <person name="Krogfelt K.A."/>
            <person name="Struve C."/>
            <person name="Triplett E.W."/>
            <person name="Methe B.A."/>
        </authorList>
    </citation>
    <scope>NUCLEOTIDE SEQUENCE [LARGE SCALE GENOMIC DNA]</scope>
    <source>
        <strain>342</strain>
    </source>
</reference>
<evidence type="ECO:0000255" key="1">
    <source>
        <dbReference type="HAMAP-Rule" id="MF_00577"/>
    </source>
</evidence>
<comment type="function">
    <text evidence="1">Catalyzes the conversion of urocanate to 4-imidazolone-5-propionate.</text>
</comment>
<comment type="catalytic activity">
    <reaction evidence="1">
        <text>4-imidazolone-5-propanoate = trans-urocanate + H2O</text>
        <dbReference type="Rhea" id="RHEA:13101"/>
        <dbReference type="ChEBI" id="CHEBI:15377"/>
        <dbReference type="ChEBI" id="CHEBI:17771"/>
        <dbReference type="ChEBI" id="CHEBI:77893"/>
        <dbReference type="EC" id="4.2.1.49"/>
    </reaction>
</comment>
<comment type="cofactor">
    <cofactor evidence="1">
        <name>NAD(+)</name>
        <dbReference type="ChEBI" id="CHEBI:57540"/>
    </cofactor>
    <text evidence="1">Binds 1 NAD(+) per subunit.</text>
</comment>
<comment type="pathway">
    <text evidence="1">Amino-acid degradation; L-histidine degradation into L-glutamate; N-formimidoyl-L-glutamate from L-histidine: step 2/3.</text>
</comment>
<comment type="subcellular location">
    <subcellularLocation>
        <location evidence="1">Cytoplasm</location>
    </subcellularLocation>
</comment>
<comment type="similarity">
    <text evidence="1">Belongs to the urocanase family.</text>
</comment>